<protein>
    <recommendedName>
        <fullName evidence="1">Tol-Pal system protein TolB</fullName>
    </recommendedName>
</protein>
<evidence type="ECO:0000255" key="1">
    <source>
        <dbReference type="HAMAP-Rule" id="MF_00671"/>
    </source>
</evidence>
<reference key="1">
    <citation type="journal article" date="2005" name="Genome Res.">
        <title>Comparative and functional genomic analyses of the pathogenicity of phytopathogen Xanthomonas campestris pv. campestris.</title>
        <authorList>
            <person name="Qian W."/>
            <person name="Jia Y."/>
            <person name="Ren S.-X."/>
            <person name="He Y.-Q."/>
            <person name="Feng J.-X."/>
            <person name="Lu L.-F."/>
            <person name="Sun Q."/>
            <person name="Ying G."/>
            <person name="Tang D.-J."/>
            <person name="Tang H."/>
            <person name="Wu W."/>
            <person name="Hao P."/>
            <person name="Wang L."/>
            <person name="Jiang B.-L."/>
            <person name="Zeng S."/>
            <person name="Gu W.-Y."/>
            <person name="Lu G."/>
            <person name="Rong L."/>
            <person name="Tian Y."/>
            <person name="Yao Z."/>
            <person name="Fu G."/>
            <person name="Chen B."/>
            <person name="Fang R."/>
            <person name="Qiang B."/>
            <person name="Chen Z."/>
            <person name="Zhao G.-P."/>
            <person name="Tang J.-L."/>
            <person name="He C."/>
        </authorList>
    </citation>
    <scope>NUCLEOTIDE SEQUENCE [LARGE SCALE GENOMIC DNA]</scope>
    <source>
        <strain>8004</strain>
    </source>
</reference>
<feature type="signal peptide" evidence="1">
    <location>
        <begin position="1"/>
        <end position="22"/>
    </location>
</feature>
<feature type="chain" id="PRO_0000259097" description="Tol-Pal system protein TolB" evidence="1">
    <location>
        <begin position="23"/>
        <end position="439"/>
    </location>
</feature>
<gene>
    <name evidence="1" type="primary">tolB</name>
    <name type="ordered locus">XC_1141</name>
</gene>
<organism>
    <name type="scientific">Xanthomonas campestris pv. campestris (strain 8004)</name>
    <dbReference type="NCBI Taxonomy" id="314565"/>
    <lineage>
        <taxon>Bacteria</taxon>
        <taxon>Pseudomonadati</taxon>
        <taxon>Pseudomonadota</taxon>
        <taxon>Gammaproteobacteria</taxon>
        <taxon>Lysobacterales</taxon>
        <taxon>Lysobacteraceae</taxon>
        <taxon>Xanthomonas</taxon>
    </lineage>
</organism>
<accession>Q4UXL2</accession>
<dbReference type="EMBL" id="CP000050">
    <property type="protein sequence ID" value="AAY48211.1"/>
    <property type="molecule type" value="Genomic_DNA"/>
</dbReference>
<dbReference type="RefSeq" id="WP_011038134.1">
    <property type="nucleotide sequence ID" value="NZ_CP155948.1"/>
</dbReference>
<dbReference type="SMR" id="Q4UXL2"/>
<dbReference type="KEGG" id="xcb:XC_1141"/>
<dbReference type="HOGENOM" id="CLU_047123_0_0_6"/>
<dbReference type="Proteomes" id="UP000000420">
    <property type="component" value="Chromosome"/>
</dbReference>
<dbReference type="GO" id="GO:0042597">
    <property type="term" value="C:periplasmic space"/>
    <property type="evidence" value="ECO:0007669"/>
    <property type="project" value="UniProtKB-SubCell"/>
</dbReference>
<dbReference type="GO" id="GO:0051301">
    <property type="term" value="P:cell division"/>
    <property type="evidence" value="ECO:0007669"/>
    <property type="project" value="UniProtKB-UniRule"/>
</dbReference>
<dbReference type="GO" id="GO:0017038">
    <property type="term" value="P:protein import"/>
    <property type="evidence" value="ECO:0007669"/>
    <property type="project" value="InterPro"/>
</dbReference>
<dbReference type="Gene3D" id="2.120.10.30">
    <property type="entry name" value="TolB, C-terminal domain"/>
    <property type="match status" value="1"/>
</dbReference>
<dbReference type="Gene3D" id="3.40.50.10070">
    <property type="entry name" value="TolB, N-terminal domain"/>
    <property type="match status" value="1"/>
</dbReference>
<dbReference type="HAMAP" id="MF_00671">
    <property type="entry name" value="TolB"/>
    <property type="match status" value="1"/>
</dbReference>
<dbReference type="InterPro" id="IPR011042">
    <property type="entry name" value="6-blade_b-propeller_TolB-like"/>
</dbReference>
<dbReference type="InterPro" id="IPR011659">
    <property type="entry name" value="PD40"/>
</dbReference>
<dbReference type="InterPro" id="IPR014167">
    <property type="entry name" value="Tol-Pal_TolB"/>
</dbReference>
<dbReference type="InterPro" id="IPR007195">
    <property type="entry name" value="TolB_N"/>
</dbReference>
<dbReference type="NCBIfam" id="TIGR02800">
    <property type="entry name" value="propeller_TolB"/>
    <property type="match status" value="1"/>
</dbReference>
<dbReference type="PANTHER" id="PTHR36842:SF1">
    <property type="entry name" value="PROTEIN TOLB"/>
    <property type="match status" value="1"/>
</dbReference>
<dbReference type="PANTHER" id="PTHR36842">
    <property type="entry name" value="PROTEIN TOLB HOMOLOG"/>
    <property type="match status" value="1"/>
</dbReference>
<dbReference type="Pfam" id="PF07676">
    <property type="entry name" value="PD40"/>
    <property type="match status" value="3"/>
</dbReference>
<dbReference type="Pfam" id="PF04052">
    <property type="entry name" value="TolB_N"/>
    <property type="match status" value="1"/>
</dbReference>
<dbReference type="SUPFAM" id="SSF52964">
    <property type="entry name" value="TolB, N-terminal domain"/>
    <property type="match status" value="1"/>
</dbReference>
<dbReference type="SUPFAM" id="SSF69304">
    <property type="entry name" value="Tricorn protease N-terminal domain"/>
    <property type="match status" value="1"/>
</dbReference>
<keyword id="KW-0131">Cell cycle</keyword>
<keyword id="KW-0132">Cell division</keyword>
<keyword id="KW-0574">Periplasm</keyword>
<keyword id="KW-0732">Signal</keyword>
<comment type="function">
    <text evidence="1">Part of the Tol-Pal system, which plays a role in outer membrane invagination during cell division and is important for maintaining outer membrane integrity.</text>
</comment>
<comment type="subunit">
    <text evidence="1">The Tol-Pal system is composed of five core proteins: the inner membrane proteins TolA, TolQ and TolR, the periplasmic protein TolB and the outer membrane protein Pal. They form a network linking the inner and outer membranes and the peptidoglycan layer.</text>
</comment>
<comment type="subcellular location">
    <subcellularLocation>
        <location evidence="1">Periplasm</location>
    </subcellularLocation>
</comment>
<comment type="similarity">
    <text evidence="1">Belongs to the TolB family.</text>
</comment>
<sequence>MKKPLRWLAALTALLLPLSAFAQQQGLTIDIVGGSASATPITVVPMPYQGSGTAPQTDVSAVVSADLDRSGQFRTLPAAQIVEKPTRGTEVQFQTWRTLKQNYIVVGRVMDAGEGAYRVEYELFDVAKGERLLGLAMTARANAMRDVSHQMADAIYEKVTGVRGAFWTRIAYVTASGSGGSMRYALMVADSDGYNPQTIVRSAEPLLSPNWSPDGKKLAYVSFERGNSSIYLQDIASGARELVSSFRGINGAPSFSPDGRRLALALSRSGNPEIYVMDLGSKQLTQLTNHFGIDTEPTWAPDGGSIYFTSDRGGRPQIYQVAASGGSANRVTFQGNYNATASVSFDGKKVAVAQGSGNTYRIAMMDRSLGSPSWSTLSPGSLDESPSFAPNASMVLYAAREGGRGVLYAVSADARVRQRLVLADGDVREPAWGPYRTAH</sequence>
<proteinExistence type="inferred from homology"/>
<name>TOLB_XANC8</name>